<comment type="subcellular location">
    <subcellularLocation>
        <location>Mitochondrion</location>
    </subcellularLocation>
    <subcellularLocation>
        <location evidence="1">Membrane</location>
        <topology evidence="1">Single-pass membrane protein</topology>
    </subcellularLocation>
</comment>
<comment type="similarity">
    <text evidence="4">Belongs to the LCL3 family.</text>
</comment>
<name>LCL3_CANDC</name>
<accession>B9W9Z5</accession>
<sequence>MPPIPPDPTESISIFHPKVILLSAGVTTSLFFGYKFYKRYIRRIKTYLDLTPTIIENNTKLYGYVTRVGDGDNFRFYHTPGGWIFGWGWLRKIPTTRKDLKDETLMIRLCGVDAPEGAHFGKPAQPFSKEALHWLREYVDGKYVTITPYSIDQYKRVVARAQIWKWTGKKDISAEMLKVGYAIVYEGKAEAEFGDNEDWYRKLESRAKLLRKGVWSLGKNLTTPGEFKRIHYRGE</sequence>
<evidence type="ECO:0000250" key="1"/>
<evidence type="ECO:0000255" key="2"/>
<evidence type="ECO:0000255" key="3">
    <source>
        <dbReference type="PROSITE-ProRule" id="PRU00272"/>
    </source>
</evidence>
<evidence type="ECO:0000305" key="4"/>
<protein>
    <recommendedName>
        <fullName>Probable endonuclease LCL3</fullName>
        <ecNumber>3.1.-.-</ecNumber>
    </recommendedName>
</protein>
<reference key="1">
    <citation type="journal article" date="2009" name="Genome Res.">
        <title>Comparative genomics of the fungal pathogens Candida dubliniensis and Candida albicans.</title>
        <authorList>
            <person name="Jackson A.P."/>
            <person name="Gamble J.A."/>
            <person name="Yeomans T."/>
            <person name="Moran G.P."/>
            <person name="Saunders D."/>
            <person name="Harris D."/>
            <person name="Aslett M."/>
            <person name="Barrell J.F."/>
            <person name="Butler G."/>
            <person name="Citiulo F."/>
            <person name="Coleman D.C."/>
            <person name="de Groot P.W.J."/>
            <person name="Goodwin T.J."/>
            <person name="Quail M.A."/>
            <person name="McQuillan J."/>
            <person name="Munro C.A."/>
            <person name="Pain A."/>
            <person name="Poulter R.T."/>
            <person name="Rajandream M.A."/>
            <person name="Renauld H."/>
            <person name="Spiering M.J."/>
            <person name="Tivey A."/>
            <person name="Gow N.A.R."/>
            <person name="Barrell B."/>
            <person name="Sullivan D.J."/>
            <person name="Berriman M."/>
        </authorList>
    </citation>
    <scope>NUCLEOTIDE SEQUENCE [LARGE SCALE GENOMIC DNA]</scope>
    <source>
        <strain>CD36 / ATCC MYA-646 / CBS 7987 / NCPF 3949 / NRRL Y-17841</strain>
    </source>
</reference>
<organism>
    <name type="scientific">Candida dubliniensis (strain CD36 / ATCC MYA-646 / CBS 7987 / NCPF 3949 / NRRL Y-17841)</name>
    <name type="common">Yeast</name>
    <dbReference type="NCBI Taxonomy" id="573826"/>
    <lineage>
        <taxon>Eukaryota</taxon>
        <taxon>Fungi</taxon>
        <taxon>Dikarya</taxon>
        <taxon>Ascomycota</taxon>
        <taxon>Saccharomycotina</taxon>
        <taxon>Pichiomycetes</taxon>
        <taxon>Debaryomycetaceae</taxon>
        <taxon>Candida/Lodderomyces clade</taxon>
        <taxon>Candida</taxon>
    </lineage>
</organism>
<keyword id="KW-0106">Calcium</keyword>
<keyword id="KW-0255">Endonuclease</keyword>
<keyword id="KW-0378">Hydrolase</keyword>
<keyword id="KW-0472">Membrane</keyword>
<keyword id="KW-0479">Metal-binding</keyword>
<keyword id="KW-0496">Mitochondrion</keyword>
<keyword id="KW-0540">Nuclease</keyword>
<keyword id="KW-0812">Transmembrane</keyword>
<keyword id="KW-1133">Transmembrane helix</keyword>
<dbReference type="EC" id="3.1.-.-"/>
<dbReference type="EMBL" id="FM992688">
    <property type="protein sequence ID" value="CAX45633.1"/>
    <property type="molecule type" value="Genomic_DNA"/>
</dbReference>
<dbReference type="RefSeq" id="XP_002417915.1">
    <property type="nucleotide sequence ID" value="XM_002417870.1"/>
</dbReference>
<dbReference type="SMR" id="B9W9Z5"/>
<dbReference type="GeneID" id="8045466"/>
<dbReference type="KEGG" id="cdu:CD36_12760"/>
<dbReference type="CGD" id="CAL0000167676">
    <property type="gene designation" value="Cd36_12760"/>
</dbReference>
<dbReference type="VEuPathDB" id="FungiDB:CD36_12760"/>
<dbReference type="eggNOG" id="ENOG502S1U4">
    <property type="taxonomic scope" value="Eukaryota"/>
</dbReference>
<dbReference type="HOGENOM" id="CLU_046484_0_1_1"/>
<dbReference type="OrthoDB" id="430293at2759"/>
<dbReference type="Proteomes" id="UP000002605">
    <property type="component" value="Chromosome 1"/>
</dbReference>
<dbReference type="GO" id="GO:0016020">
    <property type="term" value="C:membrane"/>
    <property type="evidence" value="ECO:0007669"/>
    <property type="project" value="UniProtKB-SubCell"/>
</dbReference>
<dbReference type="GO" id="GO:0005739">
    <property type="term" value="C:mitochondrion"/>
    <property type="evidence" value="ECO:0007669"/>
    <property type="project" value="UniProtKB-SubCell"/>
</dbReference>
<dbReference type="GO" id="GO:0004519">
    <property type="term" value="F:endonuclease activity"/>
    <property type="evidence" value="ECO:0007669"/>
    <property type="project" value="UniProtKB-KW"/>
</dbReference>
<dbReference type="GO" id="GO:0046872">
    <property type="term" value="F:metal ion binding"/>
    <property type="evidence" value="ECO:0007669"/>
    <property type="project" value="UniProtKB-KW"/>
</dbReference>
<dbReference type="FunFam" id="2.40.50.90:FF:000035">
    <property type="entry name" value="Probable endonuclease LCL3"/>
    <property type="match status" value="1"/>
</dbReference>
<dbReference type="Gene3D" id="2.40.50.90">
    <property type="match status" value="1"/>
</dbReference>
<dbReference type="InterPro" id="IPR035437">
    <property type="entry name" value="SNase_OB-fold_sf"/>
</dbReference>
<dbReference type="InterPro" id="IPR016071">
    <property type="entry name" value="Staphylococal_nuclease_OB-fold"/>
</dbReference>
<dbReference type="PANTHER" id="PTHR12302">
    <property type="entry name" value="EBNA2 BINDING PROTEIN P100"/>
    <property type="match status" value="1"/>
</dbReference>
<dbReference type="PANTHER" id="PTHR12302:SF3">
    <property type="entry name" value="SERINE_THREONINE-PROTEIN KINASE 31"/>
    <property type="match status" value="1"/>
</dbReference>
<dbReference type="Pfam" id="PF00565">
    <property type="entry name" value="SNase"/>
    <property type="match status" value="1"/>
</dbReference>
<dbReference type="SMART" id="SM00318">
    <property type="entry name" value="SNc"/>
    <property type="match status" value="1"/>
</dbReference>
<dbReference type="SUPFAM" id="SSF50199">
    <property type="entry name" value="Staphylococcal nuclease"/>
    <property type="match status" value="1"/>
</dbReference>
<dbReference type="PROSITE" id="PS50830">
    <property type="entry name" value="TNASE_3"/>
    <property type="match status" value="1"/>
</dbReference>
<proteinExistence type="inferred from homology"/>
<feature type="chain" id="PRO_0000408652" description="Probable endonuclease LCL3">
    <location>
        <begin position="1"/>
        <end position="235"/>
    </location>
</feature>
<feature type="transmembrane region" description="Helical" evidence="2">
    <location>
        <begin position="15"/>
        <end position="37"/>
    </location>
</feature>
<feature type="domain" description="TNase-like" evidence="3">
    <location>
        <begin position="59"/>
        <end position="217"/>
    </location>
</feature>
<feature type="active site" evidence="3">
    <location>
        <position position="108"/>
    </location>
</feature>
<feature type="active site" evidence="3">
    <location>
        <position position="116"/>
    </location>
</feature>
<feature type="active site" evidence="3">
    <location>
        <position position="156"/>
    </location>
</feature>
<feature type="binding site" evidence="3">
    <location>
        <position position="113"/>
    </location>
    <ligand>
        <name>Ca(2+)</name>
        <dbReference type="ChEBI" id="CHEBI:29108"/>
    </ligand>
</feature>
<gene>
    <name type="primary">LCL3</name>
    <name type="ORF">CD36_12760</name>
</gene>